<comment type="function">
    <text evidence="4 5">Alcohol dehydrogenase catalyzing the reduction of nitrosoglutathione (PubMed:38308388). Can also use long-chain alcohols including cinnamyl alcohol and geraniol, and, to a lower extent, octanol (PubMed:38308388). Plays a central role in formaldehyde detoxification (PubMed:12913179). Not able to use ethanol (EtOH) as substrate (PubMed:38308388).</text>
</comment>
<comment type="catalytic activity">
    <reaction evidence="4 6">
        <text>a primary alcohol + NAD(+) = an aldehyde + NADH + H(+)</text>
        <dbReference type="Rhea" id="RHEA:10736"/>
        <dbReference type="ChEBI" id="CHEBI:15378"/>
        <dbReference type="ChEBI" id="CHEBI:15734"/>
        <dbReference type="ChEBI" id="CHEBI:17478"/>
        <dbReference type="ChEBI" id="CHEBI:57540"/>
        <dbReference type="ChEBI" id="CHEBI:57945"/>
        <dbReference type="EC" id="1.1.1.1"/>
    </reaction>
</comment>
<comment type="catalytic activity">
    <reaction evidence="4 6">
        <text>a secondary alcohol + NAD(+) = a ketone + NADH + H(+)</text>
        <dbReference type="Rhea" id="RHEA:10740"/>
        <dbReference type="ChEBI" id="CHEBI:15378"/>
        <dbReference type="ChEBI" id="CHEBI:17087"/>
        <dbReference type="ChEBI" id="CHEBI:35681"/>
        <dbReference type="ChEBI" id="CHEBI:57540"/>
        <dbReference type="ChEBI" id="CHEBI:57945"/>
        <dbReference type="EC" id="1.1.1.1"/>
    </reaction>
</comment>
<comment type="catalytic activity">
    <reaction evidence="4 6">
        <text>S-(hydroxymethyl)glutathione + NADP(+) = S-formylglutathione + NADPH + H(+)</text>
        <dbReference type="Rhea" id="RHEA:19981"/>
        <dbReference type="ChEBI" id="CHEBI:15378"/>
        <dbReference type="ChEBI" id="CHEBI:57688"/>
        <dbReference type="ChEBI" id="CHEBI:57783"/>
        <dbReference type="ChEBI" id="CHEBI:58349"/>
        <dbReference type="ChEBI" id="CHEBI:58758"/>
        <dbReference type="EC" id="1.1.1.284"/>
    </reaction>
</comment>
<comment type="catalytic activity">
    <reaction evidence="4 6">
        <text>S-(hydroxymethyl)glutathione + NAD(+) = S-formylglutathione + NADH + H(+)</text>
        <dbReference type="Rhea" id="RHEA:19985"/>
        <dbReference type="ChEBI" id="CHEBI:15378"/>
        <dbReference type="ChEBI" id="CHEBI:57540"/>
        <dbReference type="ChEBI" id="CHEBI:57688"/>
        <dbReference type="ChEBI" id="CHEBI:57945"/>
        <dbReference type="ChEBI" id="CHEBI:58758"/>
        <dbReference type="EC" id="1.1.1.284"/>
    </reaction>
</comment>
<comment type="catalytic activity">
    <reaction evidence="5">
        <text>S-nitrosoglutathione + NADH + H(+) = S-(hydroxysulfenamide)glutathione + NAD(+)</text>
        <dbReference type="Rhea" id="RHEA:78371"/>
        <dbReference type="ChEBI" id="CHEBI:15378"/>
        <dbReference type="ChEBI" id="CHEBI:57540"/>
        <dbReference type="ChEBI" id="CHEBI:57945"/>
        <dbReference type="ChEBI" id="CHEBI:145544"/>
        <dbReference type="ChEBI" id="CHEBI:229723"/>
    </reaction>
    <physiologicalReaction direction="left-to-right" evidence="5">
        <dbReference type="Rhea" id="RHEA:78372"/>
    </physiologicalReaction>
</comment>
<comment type="cofactor">
    <cofactor evidence="7">
        <name>Zn(2+)</name>
        <dbReference type="ChEBI" id="CHEBI:29105"/>
    </cofactor>
    <text evidence="7">Binds 2 Zn(2+) ions per subunit.</text>
</comment>
<comment type="activity regulation">
    <text evidence="5">Repressed by thiol-modifying agents N-ethylmaleimide (NEM) and 5,5-dithio-bis-(2-nitrobenzoic acid) (DTNB), as well as by methyl methanethiosulfonate (MMTS) in a dose-dependent manner (PubMed:38308388). Inhibited by hydrogen peroxide H(2)O(2) (PubMed:38308388).</text>
</comment>
<comment type="biophysicochemical properties">
    <kinetics>
        <KM evidence="6">1.4 uM for S-(hydroxymethyl)glutathione</KM>
        <KM evidence="4">7 uM for S-hydroxymethylglutathione (at pH 8 and 25 degrees Celsius)</KM>
        <KM evidence="4">7.7 uM for farnesol (at pH 7.5 and 25 degrees Celsius)</KM>
        <KM evidence="4">22000 uM for cinnamylalcohol (at pH 7.5 and 25 degrees Celsius)</KM>
        <KM evidence="4">3 uM for farnesol (at pH 10 and 25 degrees Celsius)</KM>
        <KM evidence="4">800 uM for geraniol (at pH 10 and 25 degrees Celsius)</KM>
        <KM evidence="4">3500 uM for cinnamylalcohol (at pH 10 and 25 degrees Celsius)</KM>
        <KM evidence="4">4700 uM for 12-Hydroxydodecanoic acid (at pH 10 and 25 degrees Celsius)</KM>
        <Vmax evidence="6">1.22 umol/min/mg enzyme</Vmax>
        <text evidence="4">kcat is 1351 min(-1) with S-hydroxymethylglutathione as substrate (at pH 8 and 25 degrees Celsius). kcat is 6 min(-1) with farnesol as substrate (at pH 7.5 and 25 degrees Celsius). kcat is 324 min(-1) with cinnamylalcohol as substrate (at pH 7.5 and 25 degrees Celsius). kcat is 126 min(-1) with farnesol as substrate (at pH 10 and 25 degrees Celsius). kcat is 1200 min(-1) with geraniol as substrate (at pH 10 and 25 degrees Celsius). kcat is 1220 min(-1) with cinnamylalcohol as substrate (at pH 10 and 25 degrees Celsius). kcat is 335 min(-1) with 12-Hydroxydodecanoic acid as substrate (at pH 10 and 25 degrees Celsius).</text>
    </kinetics>
    <phDependence>
        <text evidence="5">Optimum pH is 7.9-9.</text>
    </phDependence>
</comment>
<comment type="subunit">
    <text evidence="4 7">Homodimer.</text>
</comment>
<comment type="subcellular location">
    <subcellularLocation>
        <location evidence="2">Cytoplasm</location>
    </subcellularLocation>
</comment>
<comment type="alternative products">
    <event type="alternative splicing"/>
    <isoform>
        <id>Q96533-1</id>
        <name>1</name>
        <sequence type="displayed"/>
    </isoform>
    <text>A number of isoforms are produced. According to EST sequences.</text>
</comment>
<comment type="tissue specificity">
    <text evidence="6">Ubiquitous.</text>
</comment>
<comment type="induction">
    <text evidence="3">Down-regulated by wounding and activated by salicylic acid (SA).</text>
</comment>
<comment type="similarity">
    <text evidence="14">Belongs to the zinc-containing alcohol dehydrogenase family. Class-III subfamily.</text>
</comment>
<organism>
    <name type="scientific">Arabidopsis thaliana</name>
    <name type="common">Mouse-ear cress</name>
    <dbReference type="NCBI Taxonomy" id="3702"/>
    <lineage>
        <taxon>Eukaryota</taxon>
        <taxon>Viridiplantae</taxon>
        <taxon>Streptophyta</taxon>
        <taxon>Embryophyta</taxon>
        <taxon>Tracheophyta</taxon>
        <taxon>Spermatophyta</taxon>
        <taxon>Magnoliopsida</taxon>
        <taxon>eudicotyledons</taxon>
        <taxon>Gunneridae</taxon>
        <taxon>Pentapetalae</taxon>
        <taxon>rosids</taxon>
        <taxon>malvids</taxon>
        <taxon>Brassicales</taxon>
        <taxon>Brassicaceae</taxon>
        <taxon>Camelineae</taxon>
        <taxon>Arabidopsis</taxon>
    </lineage>
</organism>
<protein>
    <recommendedName>
        <fullName evidence="12">Alcohol dehydrogenase class-3</fullName>
        <ecNumber evidence="4 5 6">1.1.1.1</ecNumber>
    </recommendedName>
    <alternativeName>
        <fullName evidence="12">Alcohol dehydrogenase class-III</fullName>
    </alternativeName>
    <alternativeName>
        <fullName evidence="8 9">Glutathione-dependent formaldehyde dehydrogenase</fullName>
        <shortName evidence="8 9">FALDH</shortName>
        <shortName evidence="10">FDH</shortName>
        <shortName evidence="10">GSH-FDH</shortName>
        <ecNumber>1.1.1.-</ecNumber>
    </alternativeName>
    <alternativeName>
        <fullName evidence="11">Nitrosoglutathione reductase</fullName>
        <ecNumber evidence="5">1.1.1.-</ecNumber>
    </alternativeName>
    <alternativeName>
        <fullName>S-(hydroxymethyl)glutathione dehydrogenase</fullName>
        <ecNumber evidence="4 6">1.1.1.284</ecNumber>
    </alternativeName>
</protein>
<gene>
    <name evidence="8 9 13" type="primary">ADH2</name>
    <name evidence="12" type="synonym">ADHIII</name>
    <name evidence="10" type="synonym">FDH1</name>
    <name evidence="11" type="synonym">GSNOR</name>
    <name evidence="15" type="ordered locus">At5g43940</name>
    <name evidence="16" type="ORF">MRH10.4</name>
</gene>
<reference key="1">
    <citation type="journal article" date="1997" name="Genetics">
        <title>Cloning of the Arabidopsis and rice formaldehyde dehydrogenase genes: implications for the origin of plant ADH enzymes.</title>
        <authorList>
            <person name="Dolferus R."/>
            <person name="Osterman J.C."/>
            <person name="Peacock W.J."/>
            <person name="Dennis E.S."/>
        </authorList>
    </citation>
    <scope>NUCLEOTIDE SEQUENCE [GENOMIC DNA]</scope>
    <source>
        <strain>cv. C24</strain>
    </source>
</reference>
<reference key="2">
    <citation type="journal article" date="1996" name="Eur. J. Biochem.">
        <title>Arabidopsis formaldehyde dehydrogenase. Molecular properties of plant class III alcohol dehydrogenase provide further insights into the origins, structure and function of plant class P and liver class I alcohol dehydrogenases.</title>
        <authorList>
            <person name="Martinez M.C."/>
            <person name="Achkor H."/>
            <person name="Persson B."/>
            <person name="Fernandez M.R."/>
            <person name="Shafqat J."/>
            <person name="Farres J."/>
            <person name="Joernvall H."/>
            <person name="Pares X."/>
        </authorList>
    </citation>
    <scope>NUCLEOTIDE SEQUENCE [MRNA]</scope>
    <scope>TISSUE SPECIFICITY</scope>
    <scope>CATALYTIC ACTIVITY</scope>
    <scope>BIOPHYSICOCHEMICAL PROPERTIES</scope>
    <source>
        <strain>cv. Landsberg erecta</strain>
        <tissue>Flower</tissue>
    </source>
</reference>
<reference key="3">
    <citation type="journal article" date="1997" name="DNA Res.">
        <title>Structural analysis of Arabidopsis thaliana chromosome 5. II. Sequence features of the regions of 1,044,062 bp covered by thirteen physically assigned P1 clones.</title>
        <authorList>
            <person name="Kotani H."/>
            <person name="Nakamura Y."/>
            <person name="Sato S."/>
            <person name="Kaneko T."/>
            <person name="Asamizu E."/>
            <person name="Miyajima N."/>
            <person name="Tabata S."/>
        </authorList>
    </citation>
    <scope>NUCLEOTIDE SEQUENCE [LARGE SCALE GENOMIC DNA]</scope>
    <source>
        <strain>cv. Columbia</strain>
    </source>
</reference>
<reference key="4">
    <citation type="journal article" date="2017" name="Plant J.">
        <title>Araport11: a complete reannotation of the Arabidopsis thaliana reference genome.</title>
        <authorList>
            <person name="Cheng C.Y."/>
            <person name="Krishnakumar V."/>
            <person name="Chan A.P."/>
            <person name="Thibaud-Nissen F."/>
            <person name="Schobel S."/>
            <person name="Town C.D."/>
        </authorList>
    </citation>
    <scope>GENOME REANNOTATION</scope>
    <source>
        <strain>cv. Columbia</strain>
    </source>
</reference>
<reference key="5">
    <citation type="journal article" date="2003" name="Science">
        <title>Empirical analysis of transcriptional activity in the Arabidopsis genome.</title>
        <authorList>
            <person name="Yamada K."/>
            <person name="Lim J."/>
            <person name="Dale J.M."/>
            <person name="Chen H."/>
            <person name="Shinn P."/>
            <person name="Palm C.J."/>
            <person name="Southwick A.M."/>
            <person name="Wu H.C."/>
            <person name="Kim C.J."/>
            <person name="Nguyen M."/>
            <person name="Pham P.K."/>
            <person name="Cheuk R.F."/>
            <person name="Karlin-Newmann G."/>
            <person name="Liu S.X."/>
            <person name="Lam B."/>
            <person name="Sakano H."/>
            <person name="Wu T."/>
            <person name="Yu G."/>
            <person name="Miranda M."/>
            <person name="Quach H.L."/>
            <person name="Tripp M."/>
            <person name="Chang C.H."/>
            <person name="Lee J.M."/>
            <person name="Toriumi M.J."/>
            <person name="Chan M.M."/>
            <person name="Tang C.C."/>
            <person name="Onodera C.S."/>
            <person name="Deng J.M."/>
            <person name="Akiyama K."/>
            <person name="Ansari Y."/>
            <person name="Arakawa T."/>
            <person name="Banh J."/>
            <person name="Banno F."/>
            <person name="Bowser L."/>
            <person name="Brooks S.Y."/>
            <person name="Carninci P."/>
            <person name="Chao Q."/>
            <person name="Choy N."/>
            <person name="Enju A."/>
            <person name="Goldsmith A.D."/>
            <person name="Gurjal M."/>
            <person name="Hansen N.F."/>
            <person name="Hayashizaki Y."/>
            <person name="Johnson-Hopson C."/>
            <person name="Hsuan V.W."/>
            <person name="Iida K."/>
            <person name="Karnes M."/>
            <person name="Khan S."/>
            <person name="Koesema E."/>
            <person name="Ishida J."/>
            <person name="Jiang P.X."/>
            <person name="Jones T."/>
            <person name="Kawai J."/>
            <person name="Kamiya A."/>
            <person name="Meyers C."/>
            <person name="Nakajima M."/>
            <person name="Narusaka M."/>
            <person name="Seki M."/>
            <person name="Sakurai T."/>
            <person name="Satou M."/>
            <person name="Tamse R."/>
            <person name="Vaysberg M."/>
            <person name="Wallender E.K."/>
            <person name="Wong C."/>
            <person name="Yamamura Y."/>
            <person name="Yuan S."/>
            <person name="Shinozaki K."/>
            <person name="Davis R.W."/>
            <person name="Theologis A."/>
            <person name="Ecker J.R."/>
        </authorList>
    </citation>
    <scope>NUCLEOTIDE SEQUENCE [LARGE SCALE MRNA]</scope>
    <source>
        <strain>cv. Columbia</strain>
    </source>
</reference>
<reference key="6">
    <citation type="submission" date="2006-07" db="EMBL/GenBank/DDBJ databases">
        <title>Large-scale analysis of RIKEN Arabidopsis full-length (RAFL) cDNAs.</title>
        <authorList>
            <person name="Totoki Y."/>
            <person name="Seki M."/>
            <person name="Ishida J."/>
            <person name="Nakajima M."/>
            <person name="Enju A."/>
            <person name="Kamiya A."/>
            <person name="Narusaka M."/>
            <person name="Shin-i T."/>
            <person name="Nakagawa M."/>
            <person name="Sakamoto N."/>
            <person name="Oishi K."/>
            <person name="Kohara Y."/>
            <person name="Kobayashi M."/>
            <person name="Toyoda A."/>
            <person name="Sakaki Y."/>
            <person name="Sakurai T."/>
            <person name="Iida K."/>
            <person name="Akiyama K."/>
            <person name="Satou M."/>
            <person name="Toyoda T."/>
            <person name="Konagaya A."/>
            <person name="Carninci P."/>
            <person name="Kawai J."/>
            <person name="Hayashizaki Y."/>
            <person name="Shinozaki K."/>
        </authorList>
    </citation>
    <scope>NUCLEOTIDE SEQUENCE [LARGE SCALE MRNA]</scope>
    <source>
        <strain>cv. Columbia</strain>
    </source>
</reference>
<reference key="7">
    <citation type="submission" date="2002-03" db="EMBL/GenBank/DDBJ databases">
        <title>Full-length cDNA from Arabidopsis thaliana.</title>
        <authorList>
            <person name="Brover V.V."/>
            <person name="Troukhan M.E."/>
            <person name="Alexandrov N.A."/>
            <person name="Lu Y.-P."/>
            <person name="Flavell R.B."/>
            <person name="Feldmann K.A."/>
        </authorList>
    </citation>
    <scope>NUCLEOTIDE SEQUENCE [LARGE SCALE MRNA]</scope>
</reference>
<reference key="8">
    <citation type="journal article" date="2003" name="FEBS Lett.">
        <title>The gene encoding glutathione-dependent formaldehyde dehydrogenase/GSNO reductase is responsive to wounding, jasmonic acid and salicylic acid.</title>
        <authorList>
            <person name="Diaz M."/>
            <person name="Achkor H."/>
            <person name="Titarenko E."/>
            <person name="Martinez M.C."/>
        </authorList>
    </citation>
    <scope>INDUCTION</scope>
</reference>
<reference key="9">
    <citation type="journal article" date="2003" name="Plant Physiol.">
        <title>Enhanced formaldehyde detoxification by overexpression of glutathione-dependent formaldehyde dehydrogenase from Arabidopsis.</title>
        <authorList>
            <person name="Achkor H."/>
            <person name="Diaz M."/>
            <person name="Fernandez M.R."/>
            <person name="Biosca J.A."/>
            <person name="Pares X."/>
            <person name="Martinez M.C."/>
        </authorList>
    </citation>
    <scope>FUNCTION</scope>
    <scope>CATALYTIC ACTIVITY</scope>
    <scope>BIOPHYSICOCHEMICAL PROPERTIES</scope>
    <scope>HOMODIMER</scope>
</reference>
<reference key="10">
    <citation type="journal article" date="2007" name="Plant Cell">
        <title>Proteome analysis of Arabidopsis leaf peroxisomes reveals novel targeting peptides, metabolic pathways, and defense mechanisms.</title>
        <authorList>
            <person name="Reumann S."/>
            <person name="Babujee L."/>
            <person name="Ma C."/>
            <person name="Wienkoop S."/>
            <person name="Siemsen T."/>
            <person name="Antonicelli G.E."/>
            <person name="Rasche N."/>
            <person name="Lueder F."/>
            <person name="Weckwerth W."/>
            <person name="Jahn O."/>
        </authorList>
    </citation>
    <scope>IDENTIFICATION BY MASS SPECTROMETRY</scope>
</reference>
<reference key="11">
    <citation type="journal article" date="2009" name="J. Proteomics">
        <title>Phosphoproteomic analysis of nuclei-enriched fractions from Arabidopsis thaliana.</title>
        <authorList>
            <person name="Jones A.M.E."/>
            <person name="MacLean D."/>
            <person name="Studholme D.J."/>
            <person name="Serna-Sanz A."/>
            <person name="Andreasson E."/>
            <person name="Rathjen J.P."/>
            <person name="Peck S.C."/>
        </authorList>
    </citation>
    <scope>IDENTIFICATION BY MASS SPECTROMETRY [LARGE SCALE ANALYSIS]</scope>
    <source>
        <strain>cv. Columbia</strain>
    </source>
</reference>
<reference key="12">
    <citation type="journal article" date="2012" name="Mol. Cell. Proteomics">
        <title>Comparative large-scale characterisation of plant vs. mammal proteins reveals similar and idiosyncratic N-alpha acetylation features.</title>
        <authorList>
            <person name="Bienvenut W.V."/>
            <person name="Sumpton D."/>
            <person name="Martinez A."/>
            <person name="Lilla S."/>
            <person name="Espagne C."/>
            <person name="Meinnel T."/>
            <person name="Giglione C."/>
        </authorList>
    </citation>
    <scope>ACETYLATION [LARGE SCALE ANALYSIS] AT ALA-2</scope>
    <scope>CLEAVAGE OF INITIATOR METHIONINE [LARGE SCALE ANALYSIS]</scope>
    <scope>IDENTIFICATION BY MASS SPECTROMETRY [LARGE SCALE ANALYSIS]</scope>
</reference>
<reference evidence="17 18 19 20" key="13">
    <citation type="submission" date="2011-11" db="PDB data bank">
        <title>Crystal structure and kinetic behavior of alcohol dehydrogenase III /S-nitrosoglutathione reductase from arabidopsis thaliana.</title>
        <authorList>
            <person name="Crotty J."/>
            <person name="Greving M."/>
            <person name="Brettschneider S."/>
            <person name="Weichsel A."/>
            <person name="Wildner G.F."/>
            <person name="Vierling E."/>
            <person name="Montfort W.R."/>
        </authorList>
    </citation>
    <scope>X-RAY CRYSTALLOGRAPHY (1.40 ANGSTROMS) OF 2-379 IN COMPLEX WITH NAD AND ZINC</scope>
    <scope>HOMODIMER</scope>
</reference>
<reference evidence="21" key="14">
    <citation type="journal article" date="2024" name="Plant J.">
        <title>Structural and biochemical characterization of Arabidopsis alcohol dehydrogenases reveals distinct functional properties but similar redox sensitivity.</title>
        <authorList>
            <person name="Meloni M."/>
            <person name="Rossi J."/>
            <person name="Fanti S."/>
            <person name="Carloni G."/>
            <person name="Tedesco D."/>
            <person name="Treffon P."/>
            <person name="Piccinini L."/>
            <person name="Falini G."/>
            <person name="Trost P."/>
            <person name="Vierling E."/>
            <person name="Licausi F."/>
            <person name="Giuntoli B."/>
            <person name="Musiani F."/>
            <person name="Fermani S."/>
            <person name="Zaffagnini M."/>
        </authorList>
    </citation>
    <scope>X-RAY CRYSTALLOGRAPHY (1.90 ANGSTROMS) IN COMPLEX WITH ZINC</scope>
    <scope>FUNCTION</scope>
    <scope>CATALYTIC ACTIVITY</scope>
    <scope>BIOPHYSICOCHEMICAL PROPERTIES</scope>
    <scope>ACTIVITY REGULATION</scope>
</reference>
<keyword id="KW-0002">3D-structure</keyword>
<keyword id="KW-0007">Acetylation</keyword>
<keyword id="KW-0025">Alternative splicing</keyword>
<keyword id="KW-0963">Cytoplasm</keyword>
<keyword id="KW-0479">Metal-binding</keyword>
<keyword id="KW-0520">NAD</keyword>
<keyword id="KW-0560">Oxidoreductase</keyword>
<keyword id="KW-1185">Reference proteome</keyword>
<keyword id="KW-0862">Zinc</keyword>
<accession>Q96533</accession>
<accession>Q0WWE1</accession>
<accession>Q43384</accession>
<accession>Q9FND2</accession>
<feature type="initiator methionine" description="Removed" evidence="22">
    <location>
        <position position="1"/>
    </location>
</feature>
<feature type="chain" id="PRO_0000160771" description="Alcohol dehydrogenase class-3">
    <location>
        <begin position="2"/>
        <end position="379"/>
    </location>
</feature>
<feature type="binding site" evidence="5 7 17 18 19 20 21">
    <location>
        <position position="47"/>
    </location>
    <ligand>
        <name>Zn(2+)</name>
        <dbReference type="ChEBI" id="CHEBI:29105"/>
        <label>1</label>
        <note>catalytic</note>
    </ligand>
</feature>
<feature type="binding site" evidence="7 17 18 19 20">
    <location>
        <position position="48"/>
    </location>
    <ligand>
        <name>NAD(+)</name>
        <dbReference type="ChEBI" id="CHEBI:57540"/>
    </ligand>
</feature>
<feature type="binding site" evidence="2">
    <location>
        <position position="49"/>
    </location>
    <ligand>
        <name>an alcohol</name>
        <dbReference type="ChEBI" id="CHEBI:30879"/>
    </ligand>
</feature>
<feature type="binding site" evidence="1">
    <location>
        <position position="69"/>
    </location>
    <ligand>
        <name>an alcohol</name>
        <dbReference type="ChEBI" id="CHEBI:30879"/>
    </ligand>
</feature>
<feature type="binding site" evidence="5 7 17 18 19 20 21">
    <location>
        <position position="69"/>
    </location>
    <ligand>
        <name>Zn(2+)</name>
        <dbReference type="ChEBI" id="CHEBI:29105"/>
        <label>1</label>
        <note>catalytic</note>
    </ligand>
</feature>
<feature type="binding site" evidence="7 17 18 19 20">
    <location>
        <position position="70"/>
    </location>
    <ligand>
        <name>Zn(2+)</name>
        <dbReference type="ChEBI" id="CHEBI:29105"/>
        <label>1</label>
        <note>catalytic</note>
    </ligand>
</feature>
<feature type="binding site" evidence="5 7 17 18 19 20 21">
    <location>
        <position position="99"/>
    </location>
    <ligand>
        <name>Zn(2+)</name>
        <dbReference type="ChEBI" id="CHEBI:29105"/>
        <label>2</label>
    </ligand>
</feature>
<feature type="binding site" evidence="5 7 17 18 19 20 21">
    <location>
        <position position="102"/>
    </location>
    <ligand>
        <name>Zn(2+)</name>
        <dbReference type="ChEBI" id="CHEBI:29105"/>
        <label>2</label>
    </ligand>
</feature>
<feature type="binding site" evidence="5 7 17 18 19 20 21">
    <location>
        <position position="105"/>
    </location>
    <ligand>
        <name>Zn(2+)</name>
        <dbReference type="ChEBI" id="CHEBI:29105"/>
        <label>2</label>
    </ligand>
</feature>
<feature type="binding site" evidence="5 7 17 18 19 20 21">
    <location>
        <position position="113"/>
    </location>
    <ligand>
        <name>Zn(2+)</name>
        <dbReference type="ChEBI" id="CHEBI:29105"/>
        <label>2</label>
    </ligand>
</feature>
<feature type="binding site" evidence="5 7 17 18 19 20 21">
    <location>
        <position position="177"/>
    </location>
    <ligand>
        <name>Zn(2+)</name>
        <dbReference type="ChEBI" id="CHEBI:29105"/>
        <label>1</label>
        <note>catalytic</note>
    </ligand>
</feature>
<feature type="binding site" evidence="7 17 18 19 20">
    <location>
        <begin position="202"/>
        <end position="207"/>
    </location>
    <ligand>
        <name>NAD(+)</name>
        <dbReference type="ChEBI" id="CHEBI:57540"/>
    </ligand>
</feature>
<feature type="binding site" evidence="7 17 18 19 20">
    <location>
        <position position="226"/>
    </location>
    <ligand>
        <name>NAD(+)</name>
        <dbReference type="ChEBI" id="CHEBI:57540"/>
    </ligand>
</feature>
<feature type="binding site" evidence="7 17 19 20">
    <location>
        <position position="231"/>
    </location>
    <ligand>
        <name>NAD(+)</name>
        <dbReference type="ChEBI" id="CHEBI:57540"/>
    </ligand>
</feature>
<feature type="binding site" evidence="7 17 18 19 20">
    <location>
        <position position="272"/>
    </location>
    <ligand>
        <name>NAD(+)</name>
        <dbReference type="ChEBI" id="CHEBI:57540"/>
    </ligand>
</feature>
<feature type="binding site" evidence="7 17 18 19 20">
    <location>
        <begin position="295"/>
        <end position="297"/>
    </location>
    <ligand>
        <name>NAD(+)</name>
        <dbReference type="ChEBI" id="CHEBI:57540"/>
    </ligand>
</feature>
<feature type="binding site" evidence="7 17 18 19 20">
    <location>
        <begin position="320"/>
        <end position="322"/>
    </location>
    <ligand>
        <name>NAD(+)</name>
        <dbReference type="ChEBI" id="CHEBI:57540"/>
    </ligand>
</feature>
<feature type="binding site" evidence="7 17 19 20">
    <location>
        <position position="372"/>
    </location>
    <ligand>
        <name>NAD(+)</name>
        <dbReference type="ChEBI" id="CHEBI:57540"/>
    </ligand>
</feature>
<feature type="modified residue" description="N-acetylalanine" evidence="22">
    <location>
        <position position="2"/>
    </location>
</feature>
<feature type="sequence conflict" description="In Ref. 1; AAB06322." evidence="14" ref="1">
    <original>E</original>
    <variation>G</variation>
    <location>
        <position position="84"/>
    </location>
</feature>
<feature type="sequence conflict" description="In Ref. 2; CAA57973." evidence="14" ref="2">
    <original>T</original>
    <variation>S</variation>
    <location>
        <position position="354"/>
    </location>
</feature>
<feature type="strand" evidence="23">
    <location>
        <begin position="8"/>
        <end position="15"/>
    </location>
</feature>
<feature type="strand" evidence="23">
    <location>
        <begin position="23"/>
        <end position="29"/>
    </location>
</feature>
<feature type="strand" evidence="23">
    <location>
        <begin position="36"/>
        <end position="46"/>
    </location>
</feature>
<feature type="helix" evidence="23">
    <location>
        <begin position="48"/>
        <end position="54"/>
    </location>
</feature>
<feature type="strand" evidence="23">
    <location>
        <begin position="63"/>
        <end position="65"/>
    </location>
</feature>
<feature type="strand" evidence="23">
    <location>
        <begin position="70"/>
        <end position="78"/>
    </location>
</feature>
<feature type="strand" evidence="23">
    <location>
        <begin position="90"/>
        <end position="93"/>
    </location>
</feature>
<feature type="strand" evidence="23">
    <location>
        <begin position="100"/>
        <end position="102"/>
    </location>
</feature>
<feature type="helix" evidence="23">
    <location>
        <begin position="103"/>
        <end position="107"/>
    </location>
</feature>
<feature type="helix" evidence="23">
    <location>
        <begin position="117"/>
        <end position="120"/>
    </location>
</feature>
<feature type="turn" evidence="23">
    <location>
        <begin position="121"/>
        <end position="123"/>
    </location>
</feature>
<feature type="turn" evidence="23">
    <location>
        <begin position="126"/>
        <end position="128"/>
    </location>
</feature>
<feature type="strand" evidence="23">
    <location>
        <begin position="132"/>
        <end position="135"/>
    </location>
</feature>
<feature type="strand" evidence="23">
    <location>
        <begin position="138"/>
        <end position="141"/>
    </location>
</feature>
<feature type="turn" evidence="23">
    <location>
        <begin position="144"/>
        <end position="146"/>
    </location>
</feature>
<feature type="strand" evidence="23">
    <location>
        <begin position="149"/>
        <end position="156"/>
    </location>
</feature>
<feature type="helix" evidence="23">
    <location>
        <begin position="157"/>
        <end position="159"/>
    </location>
</feature>
<feature type="strand" evidence="23">
    <location>
        <begin position="160"/>
        <end position="162"/>
    </location>
</feature>
<feature type="helix" evidence="23">
    <location>
        <begin position="169"/>
        <end position="172"/>
    </location>
</feature>
<feature type="helix" evidence="23">
    <location>
        <begin position="173"/>
        <end position="176"/>
    </location>
</feature>
<feature type="helix" evidence="23">
    <location>
        <begin position="178"/>
        <end position="187"/>
    </location>
</feature>
<feature type="turn" evidence="23">
    <location>
        <begin position="188"/>
        <end position="190"/>
    </location>
</feature>
<feature type="strand" evidence="23">
    <location>
        <begin position="198"/>
        <end position="201"/>
    </location>
</feature>
<feature type="helix" evidence="23">
    <location>
        <begin position="205"/>
        <end position="217"/>
    </location>
</feature>
<feature type="strand" evidence="23">
    <location>
        <begin position="222"/>
        <end position="225"/>
    </location>
</feature>
<feature type="helix" evidence="23">
    <location>
        <begin position="231"/>
        <end position="236"/>
    </location>
</feature>
<feature type="turn" evidence="23">
    <location>
        <begin position="237"/>
        <end position="239"/>
    </location>
</feature>
<feature type="strand" evidence="23">
    <location>
        <begin position="242"/>
        <end position="244"/>
    </location>
</feature>
<feature type="helix" evidence="23">
    <location>
        <begin position="246"/>
        <end position="248"/>
    </location>
</feature>
<feature type="helix" evidence="23">
    <location>
        <begin position="253"/>
        <end position="260"/>
    </location>
</feature>
<feature type="strand" evidence="23">
    <location>
        <begin position="265"/>
        <end position="270"/>
    </location>
</feature>
<feature type="helix" evidence="23">
    <location>
        <begin position="275"/>
        <end position="283"/>
    </location>
</feature>
<feature type="turn" evidence="23">
    <location>
        <begin position="287"/>
        <end position="289"/>
    </location>
</feature>
<feature type="strand" evidence="23">
    <location>
        <begin position="291"/>
        <end position="294"/>
    </location>
</feature>
<feature type="strand" evidence="23">
    <location>
        <begin position="304"/>
        <end position="306"/>
    </location>
</feature>
<feature type="helix" evidence="23">
    <location>
        <begin position="309"/>
        <end position="312"/>
    </location>
</feature>
<feature type="strand" evidence="23">
    <location>
        <begin position="316"/>
        <end position="319"/>
    </location>
</feature>
<feature type="helix" evidence="23">
    <location>
        <begin position="322"/>
        <end position="324"/>
    </location>
</feature>
<feature type="helix" evidence="23">
    <location>
        <begin position="327"/>
        <end position="339"/>
    </location>
</feature>
<feature type="helix" evidence="23">
    <location>
        <begin position="346"/>
        <end position="348"/>
    </location>
</feature>
<feature type="strand" evidence="23">
    <location>
        <begin position="349"/>
        <end position="354"/>
    </location>
</feature>
<feature type="helix" evidence="23">
    <location>
        <begin position="355"/>
        <end position="357"/>
    </location>
</feature>
<feature type="helix" evidence="23">
    <location>
        <begin position="358"/>
        <end position="364"/>
    </location>
</feature>
<feature type="strand" evidence="23">
    <location>
        <begin position="371"/>
        <end position="376"/>
    </location>
</feature>
<proteinExistence type="evidence at protein level"/>
<sequence>MATQGQVITCKAAVAYEPNKPLVIEDVQVAPPQAGEVRIKILYTALCHTDAYTWSGKDPEGLFPCILGHEAAGIVESVGEGVTEVQAGDHVIPCYQAECRECKFCKSGKTNLCGKVRSATGVGIMMNDRKSRFSVNGKPIYHFMGTSTFSQYTVVHDVSVAKIDPTAPLDKVCLLGCGVPTGLGAVWNTAKVEPGSNVAIFGLGTVGLAVAEGAKTAGASRIIGIDIDSKKYETAKKFGVNEFVNPKDHDKPIQEVIVDLTDGGVDYSFECIGNVSVMRAALECCHKGWGTSVIVGVAASGQEISTRPFQLVTGRVWKGTAFGGFKSRTQVPWLVEKYMNKEIKVDEYITHNLTLGEINKAFDLLHEGTCLRCVLDTSK</sequence>
<evidence type="ECO:0000250" key="1">
    <source>
        <dbReference type="UniProtKB" id="P00327"/>
    </source>
</evidence>
<evidence type="ECO:0000250" key="2">
    <source>
        <dbReference type="UniProtKB" id="P06525"/>
    </source>
</evidence>
<evidence type="ECO:0000269" key="3">
    <source>
    </source>
</evidence>
<evidence type="ECO:0000269" key="4">
    <source>
    </source>
</evidence>
<evidence type="ECO:0000269" key="5">
    <source>
    </source>
</evidence>
<evidence type="ECO:0000269" key="6">
    <source>
    </source>
</evidence>
<evidence type="ECO:0000269" key="7">
    <source ref="13"/>
</evidence>
<evidence type="ECO:0000303" key="8">
    <source>
    </source>
</evidence>
<evidence type="ECO:0000303" key="9">
    <source>
    </source>
</evidence>
<evidence type="ECO:0000303" key="10">
    <source>
    </source>
</evidence>
<evidence type="ECO:0000303" key="11">
    <source>
    </source>
</evidence>
<evidence type="ECO:0000303" key="12">
    <source>
    </source>
</evidence>
<evidence type="ECO:0000303" key="13">
    <source>
    </source>
</evidence>
<evidence type="ECO:0000305" key="14"/>
<evidence type="ECO:0000312" key="15">
    <source>
        <dbReference type="Araport" id="AT5G43940"/>
    </source>
</evidence>
<evidence type="ECO:0000312" key="16">
    <source>
        <dbReference type="EMBL" id="BAB09054.1"/>
    </source>
</evidence>
<evidence type="ECO:0007744" key="17">
    <source>
        <dbReference type="PDB" id="3UKO"/>
    </source>
</evidence>
<evidence type="ECO:0007744" key="18">
    <source>
        <dbReference type="PDB" id="4GL4"/>
    </source>
</evidence>
<evidence type="ECO:0007744" key="19">
    <source>
        <dbReference type="PDB" id="4JJI"/>
    </source>
</evidence>
<evidence type="ECO:0007744" key="20">
    <source>
        <dbReference type="PDB" id="4L0Q"/>
    </source>
</evidence>
<evidence type="ECO:0007744" key="21">
    <source>
        <dbReference type="PDB" id="8CO4"/>
    </source>
</evidence>
<evidence type="ECO:0007744" key="22">
    <source>
    </source>
</evidence>
<evidence type="ECO:0007829" key="23">
    <source>
        <dbReference type="PDB" id="3UKO"/>
    </source>
</evidence>
<name>ADHX_ARATH</name>
<dbReference type="EC" id="1.1.1.1" evidence="4 5 6"/>
<dbReference type="EC" id="1.1.1.-" evidence="5"/>
<dbReference type="EC" id="1.1.1.284" evidence="4 6"/>
<dbReference type="EMBL" id="U63931">
    <property type="protein sequence ID" value="AAB06322.1"/>
    <property type="molecule type" value="Genomic_DNA"/>
</dbReference>
<dbReference type="EMBL" id="X82647">
    <property type="protein sequence ID" value="CAA57973.1"/>
    <property type="molecule type" value="mRNA"/>
</dbReference>
<dbReference type="EMBL" id="AB006703">
    <property type="protein sequence ID" value="BAB09054.1"/>
    <property type="molecule type" value="Genomic_DNA"/>
</dbReference>
<dbReference type="EMBL" id="CP002688">
    <property type="protein sequence ID" value="AED95034.1"/>
    <property type="molecule type" value="Genomic_DNA"/>
</dbReference>
<dbReference type="EMBL" id="AY039601">
    <property type="protein sequence ID" value="AAK62656.1"/>
    <property type="molecule type" value="mRNA"/>
</dbReference>
<dbReference type="EMBL" id="BT010169">
    <property type="protein sequence ID" value="AAQ22638.1"/>
    <property type="molecule type" value="mRNA"/>
</dbReference>
<dbReference type="EMBL" id="AK226412">
    <property type="protein sequence ID" value="BAE98557.1"/>
    <property type="molecule type" value="mRNA"/>
</dbReference>
<dbReference type="EMBL" id="AY087250">
    <property type="protein sequence ID" value="AAM64806.1"/>
    <property type="molecule type" value="mRNA"/>
</dbReference>
<dbReference type="PIR" id="S71244">
    <property type="entry name" value="S71244"/>
</dbReference>
<dbReference type="RefSeq" id="NP_199207.1">
    <molecule id="Q96533-1"/>
    <property type="nucleotide sequence ID" value="NM_123761.4"/>
</dbReference>
<dbReference type="PDB" id="3UKO">
    <property type="method" value="X-ray"/>
    <property type="resolution" value="1.40 A"/>
    <property type="chains" value="A/B=2-379"/>
</dbReference>
<dbReference type="PDB" id="4GL4">
    <property type="method" value="X-ray"/>
    <property type="resolution" value="1.80 A"/>
    <property type="chains" value="A/B=2-379"/>
</dbReference>
<dbReference type="PDB" id="4JJI">
    <property type="method" value="X-ray"/>
    <property type="resolution" value="1.80 A"/>
    <property type="chains" value="A/B=2-379"/>
</dbReference>
<dbReference type="PDB" id="4L0Q">
    <property type="method" value="X-ray"/>
    <property type="resolution" value="1.95 A"/>
    <property type="chains" value="A/B=2-379"/>
</dbReference>
<dbReference type="PDB" id="8CO4">
    <property type="method" value="X-ray"/>
    <property type="resolution" value="1.90 A"/>
    <property type="chains" value="A/B/C/D=1-379"/>
</dbReference>
<dbReference type="PDBsum" id="3UKO"/>
<dbReference type="PDBsum" id="4GL4"/>
<dbReference type="PDBsum" id="4JJI"/>
<dbReference type="PDBsum" id="4L0Q"/>
<dbReference type="PDBsum" id="8CO4"/>
<dbReference type="SMR" id="Q96533"/>
<dbReference type="BioGRID" id="19667">
    <property type="interactions" value="4"/>
</dbReference>
<dbReference type="FunCoup" id="Q96533">
    <property type="interactions" value="3584"/>
</dbReference>
<dbReference type="STRING" id="3702.Q96533"/>
<dbReference type="iPTMnet" id="Q96533"/>
<dbReference type="PaxDb" id="3702-AT5G43940.2"/>
<dbReference type="ProteomicsDB" id="244654">
    <molecule id="Q96533-1"/>
</dbReference>
<dbReference type="EnsemblPlants" id="AT5G43940.1">
    <molecule id="Q96533-1"/>
    <property type="protein sequence ID" value="AT5G43940.1"/>
    <property type="gene ID" value="AT5G43940"/>
</dbReference>
<dbReference type="GeneID" id="834417"/>
<dbReference type="Gramene" id="AT5G43940.1">
    <molecule id="Q96533-1"/>
    <property type="protein sequence ID" value="AT5G43940.1"/>
    <property type="gene ID" value="AT5G43940"/>
</dbReference>
<dbReference type="KEGG" id="ath:AT5G43940"/>
<dbReference type="Araport" id="AT5G43940"/>
<dbReference type="TAIR" id="AT5G43940">
    <property type="gene designation" value="HOT5"/>
</dbReference>
<dbReference type="eggNOG" id="KOG0022">
    <property type="taxonomic scope" value="Eukaryota"/>
</dbReference>
<dbReference type="HOGENOM" id="CLU_026673_14_0_1"/>
<dbReference type="InParanoid" id="Q96533"/>
<dbReference type="OMA" id="IKGRSEM"/>
<dbReference type="OrthoDB" id="417550at2759"/>
<dbReference type="PhylomeDB" id="Q96533"/>
<dbReference type="BioCyc" id="ARA:AT5G43940-MONOMER"/>
<dbReference type="SABIO-RK" id="Q96533"/>
<dbReference type="CD-CODE" id="4299E36E">
    <property type="entry name" value="Nucleolus"/>
</dbReference>
<dbReference type="EvolutionaryTrace" id="Q96533"/>
<dbReference type="PRO" id="PR:Q96533"/>
<dbReference type="Proteomes" id="UP000006548">
    <property type="component" value="Chromosome 5"/>
</dbReference>
<dbReference type="ExpressionAtlas" id="Q96533">
    <property type="expression patterns" value="baseline and differential"/>
</dbReference>
<dbReference type="GO" id="GO:0005737">
    <property type="term" value="C:cytoplasm"/>
    <property type="evidence" value="ECO:0007669"/>
    <property type="project" value="UniProtKB-SubCell"/>
</dbReference>
<dbReference type="GO" id="GO:0004022">
    <property type="term" value="F:alcohol dehydrogenase (NAD+) activity"/>
    <property type="evidence" value="ECO:0007669"/>
    <property type="project" value="UniProtKB-EC"/>
</dbReference>
<dbReference type="GO" id="GO:0106322">
    <property type="term" value="F:S-(hydroxymethyl)glutathione dehydrogenase (NAD+) activity"/>
    <property type="evidence" value="ECO:0007669"/>
    <property type="project" value="RHEA"/>
</dbReference>
<dbReference type="GO" id="GO:0106321">
    <property type="term" value="F:S-(hydroxymethyl)glutathione dehydrogenase (NADP+) activity"/>
    <property type="evidence" value="ECO:0007669"/>
    <property type="project" value="RHEA"/>
</dbReference>
<dbReference type="GO" id="GO:0080007">
    <property type="term" value="F:S-nitrosoglutathione reductase (NADH) activity"/>
    <property type="evidence" value="ECO:0007669"/>
    <property type="project" value="RHEA"/>
</dbReference>
<dbReference type="GO" id="GO:0008270">
    <property type="term" value="F:zinc ion binding"/>
    <property type="evidence" value="ECO:0007669"/>
    <property type="project" value="InterPro"/>
</dbReference>
<dbReference type="GO" id="GO:0046294">
    <property type="term" value="P:formaldehyde catabolic process"/>
    <property type="evidence" value="ECO:0007669"/>
    <property type="project" value="InterPro"/>
</dbReference>
<dbReference type="CDD" id="cd08300">
    <property type="entry name" value="alcohol_DH_class_III"/>
    <property type="match status" value="1"/>
</dbReference>
<dbReference type="FunFam" id="3.40.50.720:FF:000003">
    <property type="entry name" value="S-(hydroxymethyl)glutathione dehydrogenase"/>
    <property type="match status" value="1"/>
</dbReference>
<dbReference type="FunFam" id="3.90.180.10:FF:000001">
    <property type="entry name" value="S-(hydroxymethyl)glutathione dehydrogenase"/>
    <property type="match status" value="1"/>
</dbReference>
<dbReference type="Gene3D" id="3.90.180.10">
    <property type="entry name" value="Medium-chain alcohol dehydrogenases, catalytic domain"/>
    <property type="match status" value="1"/>
</dbReference>
<dbReference type="Gene3D" id="3.40.50.720">
    <property type="entry name" value="NAD(P)-binding Rossmann-like Domain"/>
    <property type="match status" value="1"/>
</dbReference>
<dbReference type="InterPro" id="IPR013149">
    <property type="entry name" value="ADH-like_C"/>
</dbReference>
<dbReference type="InterPro" id="IPR013154">
    <property type="entry name" value="ADH-like_N"/>
</dbReference>
<dbReference type="InterPro" id="IPR014183">
    <property type="entry name" value="ADH_3"/>
</dbReference>
<dbReference type="InterPro" id="IPR002328">
    <property type="entry name" value="ADH_Zn_CS"/>
</dbReference>
<dbReference type="InterPro" id="IPR011032">
    <property type="entry name" value="GroES-like_sf"/>
</dbReference>
<dbReference type="InterPro" id="IPR036291">
    <property type="entry name" value="NAD(P)-bd_dom_sf"/>
</dbReference>
<dbReference type="NCBIfam" id="TIGR02818">
    <property type="entry name" value="adh_III_F_hyde"/>
    <property type="match status" value="1"/>
</dbReference>
<dbReference type="PANTHER" id="PTHR43880">
    <property type="entry name" value="ALCOHOL DEHYDROGENASE"/>
    <property type="match status" value="1"/>
</dbReference>
<dbReference type="PANTHER" id="PTHR43880:SF58">
    <property type="entry name" value="ALCOHOL DEHYDROGENASE CLASS-3"/>
    <property type="match status" value="1"/>
</dbReference>
<dbReference type="Pfam" id="PF08240">
    <property type="entry name" value="ADH_N"/>
    <property type="match status" value="1"/>
</dbReference>
<dbReference type="Pfam" id="PF00107">
    <property type="entry name" value="ADH_zinc_N"/>
    <property type="match status" value="1"/>
</dbReference>
<dbReference type="SUPFAM" id="SSF50129">
    <property type="entry name" value="GroES-like"/>
    <property type="match status" value="2"/>
</dbReference>
<dbReference type="SUPFAM" id="SSF51735">
    <property type="entry name" value="NAD(P)-binding Rossmann-fold domains"/>
    <property type="match status" value="1"/>
</dbReference>
<dbReference type="PROSITE" id="PS00059">
    <property type="entry name" value="ADH_ZINC"/>
    <property type="match status" value="1"/>
</dbReference>